<reference key="1">
    <citation type="submission" date="1998-01" db="EMBL/GenBank/DDBJ databases">
        <authorList>
            <person name="Mintz K.P."/>
        </authorList>
    </citation>
    <scope>NUCLEOTIDE SEQUENCE [GENOMIC DNA]</scope>
    <source>
        <strain>SUNY 465</strain>
    </source>
</reference>
<protein>
    <recommendedName>
        <fullName>Outer-membrane lipoprotein LolB</fullName>
    </recommendedName>
</protein>
<name>LOLB_AGGAC</name>
<keyword id="KW-0998">Cell outer membrane</keyword>
<keyword id="KW-0143">Chaperone</keyword>
<keyword id="KW-0449">Lipoprotein</keyword>
<keyword id="KW-0472">Membrane</keyword>
<keyword id="KW-0564">Palmitate</keyword>
<keyword id="KW-0653">Protein transport</keyword>
<keyword id="KW-0732">Signal</keyword>
<keyword id="KW-0813">Transport</keyword>
<organism>
    <name type="scientific">Aggregatibacter actinomycetemcomitans</name>
    <name type="common">Actinobacillus actinomycetemcomitans</name>
    <name type="synonym">Haemophilus actinomycetemcomitans</name>
    <dbReference type="NCBI Taxonomy" id="714"/>
    <lineage>
        <taxon>Bacteria</taxon>
        <taxon>Pseudomonadati</taxon>
        <taxon>Pseudomonadota</taxon>
        <taxon>Gammaproteobacteria</taxon>
        <taxon>Pasteurellales</taxon>
        <taxon>Pasteurellaceae</taxon>
        <taxon>Aggregatibacter</taxon>
    </lineage>
</organism>
<gene>
    <name type="primary">lolB</name>
    <name type="synonym">hemM</name>
</gene>
<evidence type="ECO:0000250" key="1"/>
<evidence type="ECO:0000255" key="2"/>
<evidence type="ECO:0000305" key="3"/>
<proteinExistence type="inferred from homology"/>
<comment type="function">
    <text evidence="1">Plays a critical role in the incorporation of lipoproteins in the outer membrane after they are released by the LolA protein.</text>
</comment>
<comment type="subunit">
    <text evidence="1">Monomer.</text>
</comment>
<comment type="subcellular location">
    <subcellularLocation>
        <location evidence="1">Cell outer membrane</location>
        <topology evidence="1">Lipid-anchor</topology>
    </subcellularLocation>
</comment>
<comment type="similarity">
    <text evidence="3">Belongs to the LolB family.</text>
</comment>
<comment type="caution">
    <text evidence="3">Was originally thought to be involved in delta-aminolevulinic acid biosynthesis.</text>
</comment>
<sequence>MKKLKSYVLLVLAVLFLTACVTDQERPTNVKYIEKTDRTWQQHFTQLKQIQGYPALGQLGYISSKERFSTRFDWQYNNPRDYTLQLYSTISSETLQIQMHAQGMTISDNKGRQRSAADAKMLLREIIGMDFPLEQFAFWLKGQPEDNADYQVGENHLLATFSRTIDGKPWTADYLSYHVNRRPPMPENILLKTEGQTLKIRVDEWLF</sequence>
<feature type="signal peptide" evidence="2">
    <location>
        <begin position="1"/>
        <end position="19"/>
    </location>
</feature>
<feature type="chain" id="PRO_0000018290" description="Outer-membrane lipoprotein LolB">
    <location>
        <begin position="20"/>
        <end position="207"/>
    </location>
</feature>
<feature type="lipid moiety-binding region" description="N-palmitoyl cysteine" evidence="2">
    <location>
        <position position="20"/>
    </location>
</feature>
<feature type="lipid moiety-binding region" description="S-diacylglycerol cysteine" evidence="2">
    <location>
        <position position="20"/>
    </location>
</feature>
<dbReference type="EMBL" id="AF045460">
    <property type="protein sequence ID" value="AAC04857.1"/>
    <property type="molecule type" value="Genomic_DNA"/>
</dbReference>
<dbReference type="SMR" id="O52727"/>
<dbReference type="STRING" id="714.ACT75_02035"/>
<dbReference type="eggNOG" id="COG3017">
    <property type="taxonomic scope" value="Bacteria"/>
</dbReference>
<dbReference type="GO" id="GO:0009279">
    <property type="term" value="C:cell outer membrane"/>
    <property type="evidence" value="ECO:0007669"/>
    <property type="project" value="UniProtKB-SubCell"/>
</dbReference>
<dbReference type="GO" id="GO:0044874">
    <property type="term" value="P:lipoprotein localization to outer membrane"/>
    <property type="evidence" value="ECO:0007669"/>
    <property type="project" value="UniProtKB-UniRule"/>
</dbReference>
<dbReference type="GO" id="GO:0015031">
    <property type="term" value="P:protein transport"/>
    <property type="evidence" value="ECO:0007669"/>
    <property type="project" value="UniProtKB-KW"/>
</dbReference>
<dbReference type="CDD" id="cd16326">
    <property type="entry name" value="LolB"/>
    <property type="match status" value="1"/>
</dbReference>
<dbReference type="Gene3D" id="2.50.20.10">
    <property type="entry name" value="Lipoprotein localisation LolA/LolB/LppX"/>
    <property type="match status" value="1"/>
</dbReference>
<dbReference type="HAMAP" id="MF_00233">
    <property type="entry name" value="LolB"/>
    <property type="match status" value="1"/>
</dbReference>
<dbReference type="InterPro" id="IPR029046">
    <property type="entry name" value="LolA/LolB/LppX"/>
</dbReference>
<dbReference type="InterPro" id="IPR004565">
    <property type="entry name" value="OM_lipoprot_LolB"/>
</dbReference>
<dbReference type="NCBIfam" id="TIGR00548">
    <property type="entry name" value="lolB"/>
    <property type="match status" value="1"/>
</dbReference>
<dbReference type="Pfam" id="PF03550">
    <property type="entry name" value="LolB"/>
    <property type="match status" value="1"/>
</dbReference>
<dbReference type="SUPFAM" id="SSF89392">
    <property type="entry name" value="Prokaryotic lipoproteins and lipoprotein localization factors"/>
    <property type="match status" value="1"/>
</dbReference>
<dbReference type="PROSITE" id="PS51257">
    <property type="entry name" value="PROKAR_LIPOPROTEIN"/>
    <property type="match status" value="1"/>
</dbReference>
<accession>O52727</accession>